<keyword id="KW-0963">Cytoplasm</keyword>
<dbReference type="EMBL" id="CP001233">
    <property type="protein sequence ID" value="ACP04361.1"/>
    <property type="molecule type" value="Genomic_DNA"/>
</dbReference>
<dbReference type="RefSeq" id="WP_000143763.1">
    <property type="nucleotide sequence ID" value="NC_012578.1"/>
</dbReference>
<dbReference type="SMR" id="C3LP97"/>
<dbReference type="GeneID" id="69721180"/>
<dbReference type="KEGG" id="vcm:VCM66_0024"/>
<dbReference type="HOGENOM" id="CLU_165255_5_1_6"/>
<dbReference type="Proteomes" id="UP000001217">
    <property type="component" value="Chromosome I"/>
</dbReference>
<dbReference type="GO" id="GO:0005737">
    <property type="term" value="C:cytoplasm"/>
    <property type="evidence" value="ECO:0007669"/>
    <property type="project" value="UniProtKB-SubCell"/>
</dbReference>
<dbReference type="GO" id="GO:0097163">
    <property type="term" value="F:sulfur carrier activity"/>
    <property type="evidence" value="ECO:0007669"/>
    <property type="project" value="UniProtKB-UniRule"/>
</dbReference>
<dbReference type="GO" id="GO:0002143">
    <property type="term" value="P:tRNA wobble position uridine thiolation"/>
    <property type="evidence" value="ECO:0007669"/>
    <property type="project" value="InterPro"/>
</dbReference>
<dbReference type="Gene3D" id="3.30.110.40">
    <property type="entry name" value="TusA-like domain"/>
    <property type="match status" value="1"/>
</dbReference>
<dbReference type="HAMAP" id="MF_00413">
    <property type="entry name" value="Thiourid_synth_A"/>
    <property type="match status" value="1"/>
</dbReference>
<dbReference type="InterPro" id="IPR022931">
    <property type="entry name" value="Sulphur_carrier_TusA"/>
</dbReference>
<dbReference type="InterPro" id="IPR001455">
    <property type="entry name" value="TusA-like"/>
</dbReference>
<dbReference type="InterPro" id="IPR036868">
    <property type="entry name" value="TusA-like_sf"/>
</dbReference>
<dbReference type="NCBIfam" id="NF001423">
    <property type="entry name" value="PRK00299.1"/>
    <property type="match status" value="1"/>
</dbReference>
<dbReference type="PANTHER" id="PTHR33279:SF2">
    <property type="entry name" value="SULFUR CARRIER PROTEIN TUSA"/>
    <property type="match status" value="1"/>
</dbReference>
<dbReference type="PANTHER" id="PTHR33279">
    <property type="entry name" value="SULFUR CARRIER PROTEIN YEDF-RELATED"/>
    <property type="match status" value="1"/>
</dbReference>
<dbReference type="Pfam" id="PF01206">
    <property type="entry name" value="TusA"/>
    <property type="match status" value="1"/>
</dbReference>
<dbReference type="SUPFAM" id="SSF64307">
    <property type="entry name" value="SirA-like"/>
    <property type="match status" value="1"/>
</dbReference>
<dbReference type="PROSITE" id="PS01148">
    <property type="entry name" value="UPF0033"/>
    <property type="match status" value="1"/>
</dbReference>
<feature type="chain" id="PRO_1000199935" description="Sulfur carrier protein TusA">
    <location>
        <begin position="1"/>
        <end position="82"/>
    </location>
</feature>
<feature type="active site" description="Cysteine persulfide intermediate" evidence="1">
    <location>
        <position position="19"/>
    </location>
</feature>
<sequence length="82" mass="9279">MTFNPNIATHTLEAEGLRCPEPVMMVRKTIRTMLDGEVLLVTADDPSTTRDIPSFCRFMDHQLLGAQIDQLPYQYLIKKGLA</sequence>
<organism>
    <name type="scientific">Vibrio cholerae serotype O1 (strain M66-2)</name>
    <dbReference type="NCBI Taxonomy" id="579112"/>
    <lineage>
        <taxon>Bacteria</taxon>
        <taxon>Pseudomonadati</taxon>
        <taxon>Pseudomonadota</taxon>
        <taxon>Gammaproteobacteria</taxon>
        <taxon>Vibrionales</taxon>
        <taxon>Vibrionaceae</taxon>
        <taxon>Vibrio</taxon>
    </lineage>
</organism>
<accession>C3LP97</accession>
<protein>
    <recommendedName>
        <fullName evidence="1">Sulfur carrier protein TusA</fullName>
    </recommendedName>
</protein>
<evidence type="ECO:0000255" key="1">
    <source>
        <dbReference type="HAMAP-Rule" id="MF_00413"/>
    </source>
</evidence>
<gene>
    <name evidence="1" type="primary">tusA</name>
    <name type="ordered locus">VCM66_0024</name>
</gene>
<reference key="1">
    <citation type="journal article" date="2008" name="PLoS ONE">
        <title>A recalibrated molecular clock and independent origins for the cholera pandemic clones.</title>
        <authorList>
            <person name="Feng L."/>
            <person name="Reeves P.R."/>
            <person name="Lan R."/>
            <person name="Ren Y."/>
            <person name="Gao C."/>
            <person name="Zhou Z."/>
            <person name="Ren Y."/>
            <person name="Cheng J."/>
            <person name="Wang W."/>
            <person name="Wang J."/>
            <person name="Qian W."/>
            <person name="Li D."/>
            <person name="Wang L."/>
        </authorList>
    </citation>
    <scope>NUCLEOTIDE SEQUENCE [LARGE SCALE GENOMIC DNA]</scope>
    <source>
        <strain>M66-2</strain>
    </source>
</reference>
<proteinExistence type="inferred from homology"/>
<name>TUSA_VIBCM</name>
<comment type="function">
    <text evidence="1">Sulfur carrier protein which probably makes part of a sulfur-relay system.</text>
</comment>
<comment type="subcellular location">
    <subcellularLocation>
        <location evidence="1">Cytoplasm</location>
    </subcellularLocation>
</comment>
<comment type="similarity">
    <text evidence="1">Belongs to the sulfur carrier protein TusA family.</text>
</comment>